<keyword id="KW-0143">Chaperone</keyword>
<keyword id="KW-0312">Gluconeogenesis</keyword>
<keyword id="KW-0496">Mitochondrion</keyword>
<keyword id="KW-1185">Reference proteome</keyword>
<keyword id="KW-0809">Transit peptide</keyword>
<feature type="transit peptide" description="Mitochondrion" evidence="3">
    <location>
        <begin position="1"/>
        <end position="59"/>
    </location>
</feature>
<feature type="chain" id="PRO_0000042752" description="Succinate dehydrogenase assembly factor 3, mitochondrial">
    <location>
        <begin position="60"/>
        <end position="173"/>
    </location>
</feature>
<feature type="region of interest" description="Disordered" evidence="4">
    <location>
        <begin position="149"/>
        <end position="173"/>
    </location>
</feature>
<feature type="compositionally biased region" description="Basic and acidic residues" evidence="4">
    <location>
        <begin position="152"/>
        <end position="162"/>
    </location>
</feature>
<dbReference type="EMBL" id="CM003144">
    <property type="protein sequence ID" value="KIS69642.1"/>
    <property type="molecule type" value="Genomic_DNA"/>
</dbReference>
<dbReference type="RefSeq" id="XP_011388792.1">
    <property type="nucleotide sequence ID" value="XM_011390490.1"/>
</dbReference>
<dbReference type="SMR" id="Q4PCI7"/>
<dbReference type="FunCoup" id="Q4PCI7">
    <property type="interactions" value="57"/>
</dbReference>
<dbReference type="STRING" id="237631.Q4PCI7"/>
<dbReference type="EnsemblFungi" id="KIS69642">
    <property type="protein sequence ID" value="KIS69642"/>
    <property type="gene ID" value="UMAG_10065"/>
</dbReference>
<dbReference type="GeneID" id="23566139"/>
<dbReference type="KEGG" id="uma:UMAG_10065"/>
<dbReference type="VEuPathDB" id="FungiDB:UMAG_10065"/>
<dbReference type="eggNOG" id="KOG4100">
    <property type="taxonomic scope" value="Eukaryota"/>
</dbReference>
<dbReference type="InParanoid" id="Q4PCI7"/>
<dbReference type="OrthoDB" id="278329at2759"/>
<dbReference type="Proteomes" id="UP000000561">
    <property type="component" value="Chromosome 5"/>
</dbReference>
<dbReference type="GO" id="GO:0005758">
    <property type="term" value="C:mitochondrial intermembrane space"/>
    <property type="evidence" value="ECO:0000318"/>
    <property type="project" value="GO_Central"/>
</dbReference>
<dbReference type="GO" id="GO:0005759">
    <property type="term" value="C:mitochondrial matrix"/>
    <property type="evidence" value="ECO:0007669"/>
    <property type="project" value="UniProtKB-SubCell"/>
</dbReference>
<dbReference type="GO" id="GO:0006094">
    <property type="term" value="P:gluconeogenesis"/>
    <property type="evidence" value="ECO:0007669"/>
    <property type="project" value="UniProtKB-KW"/>
</dbReference>
<dbReference type="GO" id="GO:0034553">
    <property type="term" value="P:mitochondrial respiratory chain complex II assembly"/>
    <property type="evidence" value="ECO:0000318"/>
    <property type="project" value="GO_Central"/>
</dbReference>
<dbReference type="GO" id="GO:0006105">
    <property type="term" value="P:succinate metabolic process"/>
    <property type="evidence" value="ECO:0000318"/>
    <property type="project" value="GO_Central"/>
</dbReference>
<dbReference type="CDD" id="cd20270">
    <property type="entry name" value="Complex1_LYR_SDHAF3_LYRM10"/>
    <property type="match status" value="1"/>
</dbReference>
<dbReference type="InterPro" id="IPR008381">
    <property type="entry name" value="SDHAF3/Sdh7"/>
</dbReference>
<dbReference type="PANTHER" id="PTHR13137">
    <property type="entry name" value="DC11 ACN9 HOMOLOG"/>
    <property type="match status" value="1"/>
</dbReference>
<dbReference type="PANTHER" id="PTHR13137:SF6">
    <property type="entry name" value="SUCCINATE DEHYDROGENASE ASSEMBLY FACTOR 3, MITOCHONDRIAL"/>
    <property type="match status" value="1"/>
</dbReference>
<dbReference type="Pfam" id="PF13233">
    <property type="entry name" value="Complex1_LYR_2"/>
    <property type="match status" value="1"/>
</dbReference>
<sequence>MFRPSTSLALRSTLRQLASASNQPIPPGSEINAVKRTVATILPPIRLYRRIIRAHRRLDPDMRAVGDNYVKDEFRRHKNIDNPLQIIGFLSSWKMYLDQLEVQQGQPGGFRGQRLDPQLLEKMSDEQIYQIHELMTATQEAYSDKAQAFPPEKQRELAEKAAADAGLSVKKDE</sequence>
<evidence type="ECO:0000250" key="1">
    <source>
        <dbReference type="UniProtKB" id="Q04401"/>
    </source>
</evidence>
<evidence type="ECO:0000250" key="2">
    <source>
        <dbReference type="UniProtKB" id="Q8SZ16"/>
    </source>
</evidence>
<evidence type="ECO:0000255" key="3"/>
<evidence type="ECO:0000256" key="4">
    <source>
        <dbReference type="SAM" id="MobiDB-lite"/>
    </source>
</evidence>
<evidence type="ECO:0000305" key="5"/>
<protein>
    <recommendedName>
        <fullName evidence="1">Succinate dehydrogenase assembly factor 3, mitochondrial</fullName>
        <shortName evidence="1">SDH assembly factor 3</shortName>
        <shortName evidence="1">SDHAF3</shortName>
    </recommendedName>
</protein>
<comment type="function">
    <text evidence="1 2">Plays an essential role in the assembly of succinate dehydrogenase (SDH), an enzyme complex (also referred to as respiratory complex II) that is a component of both the tricarboxylic acid (TCA) cycle and the mitochondrial electron transport chain, and which couples the oxidation of succinate to fumarate with the reduction of ubiquinone (coenzyme Q) to ubiquinol. Promotes maturation of the iron-sulfur protein subunit of the SDH catalytic dimer, protecting it from the deleterious effects of oxidants. May act together with SDHAF1.</text>
</comment>
<comment type="subunit">
    <text evidence="1">Interacts with the iron-sulfur protein subunit within the SDH catalytic dimer.</text>
</comment>
<comment type="subcellular location">
    <subcellularLocation>
        <location evidence="1">Mitochondrion matrix</location>
    </subcellularLocation>
</comment>
<comment type="similarity">
    <text evidence="5">Belongs to the complex I LYR family. SDHAF3 subfamily.</text>
</comment>
<gene>
    <name type="ORF">UMAG_10065</name>
</gene>
<reference key="1">
    <citation type="journal article" date="2006" name="Nature">
        <title>Insights from the genome of the biotrophic fungal plant pathogen Ustilago maydis.</title>
        <authorList>
            <person name="Kaemper J."/>
            <person name="Kahmann R."/>
            <person name="Boelker M."/>
            <person name="Ma L.-J."/>
            <person name="Brefort T."/>
            <person name="Saville B.J."/>
            <person name="Banuett F."/>
            <person name="Kronstad J.W."/>
            <person name="Gold S.E."/>
            <person name="Mueller O."/>
            <person name="Perlin M.H."/>
            <person name="Woesten H.A.B."/>
            <person name="de Vries R."/>
            <person name="Ruiz-Herrera J."/>
            <person name="Reynaga-Pena C.G."/>
            <person name="Snetselaar K."/>
            <person name="McCann M."/>
            <person name="Perez-Martin J."/>
            <person name="Feldbruegge M."/>
            <person name="Basse C.W."/>
            <person name="Steinberg G."/>
            <person name="Ibeas J.I."/>
            <person name="Holloman W."/>
            <person name="Guzman P."/>
            <person name="Farman M.L."/>
            <person name="Stajich J.E."/>
            <person name="Sentandreu R."/>
            <person name="Gonzalez-Prieto J.M."/>
            <person name="Kennell J.C."/>
            <person name="Molina L."/>
            <person name="Schirawski J."/>
            <person name="Mendoza-Mendoza A."/>
            <person name="Greilinger D."/>
            <person name="Muench K."/>
            <person name="Roessel N."/>
            <person name="Scherer M."/>
            <person name="Vranes M."/>
            <person name="Ladendorf O."/>
            <person name="Vincon V."/>
            <person name="Fuchs U."/>
            <person name="Sandrock B."/>
            <person name="Meng S."/>
            <person name="Ho E.C.H."/>
            <person name="Cahill M.J."/>
            <person name="Boyce K.J."/>
            <person name="Klose J."/>
            <person name="Klosterman S.J."/>
            <person name="Deelstra H.J."/>
            <person name="Ortiz-Castellanos L."/>
            <person name="Li W."/>
            <person name="Sanchez-Alonso P."/>
            <person name="Schreier P.H."/>
            <person name="Haeuser-Hahn I."/>
            <person name="Vaupel M."/>
            <person name="Koopmann E."/>
            <person name="Friedrich G."/>
            <person name="Voss H."/>
            <person name="Schlueter T."/>
            <person name="Margolis J."/>
            <person name="Platt D."/>
            <person name="Swimmer C."/>
            <person name="Gnirke A."/>
            <person name="Chen F."/>
            <person name="Vysotskaia V."/>
            <person name="Mannhaupt G."/>
            <person name="Gueldener U."/>
            <person name="Muensterkoetter M."/>
            <person name="Haase D."/>
            <person name="Oesterheld M."/>
            <person name="Mewes H.-W."/>
            <person name="Mauceli E.W."/>
            <person name="DeCaprio D."/>
            <person name="Wade C.M."/>
            <person name="Butler J."/>
            <person name="Young S.K."/>
            <person name="Jaffe D.B."/>
            <person name="Calvo S.E."/>
            <person name="Nusbaum C."/>
            <person name="Galagan J.E."/>
            <person name="Birren B.W."/>
        </authorList>
    </citation>
    <scope>NUCLEOTIDE SEQUENCE [LARGE SCALE GENOMIC DNA]</scope>
    <source>
        <strain>DSM 14603 / FGSC 9021 / UM521</strain>
    </source>
</reference>
<reference key="2">
    <citation type="submission" date="2014-09" db="EMBL/GenBank/DDBJ databases">
        <authorList>
            <person name="Gueldener U."/>
            <person name="Muensterkoetter M."/>
            <person name="Walter M.C."/>
            <person name="Mannhaupt G."/>
            <person name="Kahmann R."/>
        </authorList>
    </citation>
    <scope>GENOME REANNOTATION</scope>
    <source>
        <strain>DSM 14603 / FGSC 9021 / UM521</strain>
    </source>
</reference>
<proteinExistence type="inferred from homology"/>
<accession>Q4PCI7</accession>
<accession>A0A0D1C864</accession>
<organism>
    <name type="scientific">Mycosarcoma maydis</name>
    <name type="common">Corn smut fungus</name>
    <name type="synonym">Ustilago maydis</name>
    <dbReference type="NCBI Taxonomy" id="5270"/>
    <lineage>
        <taxon>Eukaryota</taxon>
        <taxon>Fungi</taxon>
        <taxon>Dikarya</taxon>
        <taxon>Basidiomycota</taxon>
        <taxon>Ustilaginomycotina</taxon>
        <taxon>Ustilaginomycetes</taxon>
        <taxon>Ustilaginales</taxon>
        <taxon>Ustilaginaceae</taxon>
        <taxon>Mycosarcoma</taxon>
    </lineage>
</organism>
<name>SDHF3_MYCMD</name>